<comment type="function">
    <text evidence="1">Part of a complex that catalyzes the reversible reduction of CoM-S-S-CoB to the thiol-coenzymes H-S-CoM (coenzyme M) and H-S-CoB (coenzyme B).</text>
</comment>
<comment type="cofactor">
    <cofactor evidence="2">
        <name>[4Fe-4S] cluster</name>
        <dbReference type="ChEBI" id="CHEBI:49883"/>
    </cofactor>
    <text evidence="2">Binds 2 [4Fe-4S] clusters per subunit.</text>
</comment>
<comment type="pathway">
    <text evidence="1">Cofactor metabolism; coenzyme M-coenzyme B heterodisulfide reduction; coenzyme B and coenzyme M from coenzyme M-coenzyme B heterodisulfide: step 1/1.</text>
</comment>
<comment type="subunit">
    <text evidence="1">The heterodisulfide reductase is composed of three subunits; HdrA, HdrB and HdrC.</text>
</comment>
<comment type="similarity">
    <text evidence="3">Belongs to the HdrC family.</text>
</comment>
<keyword id="KW-0004">4Fe-4S</keyword>
<keyword id="KW-0408">Iron</keyword>
<keyword id="KW-0411">Iron-sulfur</keyword>
<keyword id="KW-0479">Metal-binding</keyword>
<keyword id="KW-0484">Methanogenesis</keyword>
<keyword id="KW-0560">Oxidoreductase</keyword>
<keyword id="KW-1185">Reference proteome</keyword>
<keyword id="KW-0677">Repeat</keyword>
<accession>Q58274</accession>
<reference key="1">
    <citation type="journal article" date="1996" name="Science">
        <title>Complete genome sequence of the methanogenic archaeon, Methanococcus jannaschii.</title>
        <authorList>
            <person name="Bult C.J."/>
            <person name="White O."/>
            <person name="Olsen G.J."/>
            <person name="Zhou L."/>
            <person name="Fleischmann R.D."/>
            <person name="Sutton G.G."/>
            <person name="Blake J.A."/>
            <person name="FitzGerald L.M."/>
            <person name="Clayton R.A."/>
            <person name="Gocayne J.D."/>
            <person name="Kerlavage A.R."/>
            <person name="Dougherty B.A."/>
            <person name="Tomb J.-F."/>
            <person name="Adams M.D."/>
            <person name="Reich C.I."/>
            <person name="Overbeek R."/>
            <person name="Kirkness E.F."/>
            <person name="Weinstock K.G."/>
            <person name="Merrick J.M."/>
            <person name="Glodek A."/>
            <person name="Scott J.L."/>
            <person name="Geoghagen N.S.M."/>
            <person name="Weidman J.F."/>
            <person name="Fuhrmann J.L."/>
            <person name="Nguyen D."/>
            <person name="Utterback T.R."/>
            <person name="Kelley J.M."/>
            <person name="Peterson J.D."/>
            <person name="Sadow P.W."/>
            <person name="Hanna M.C."/>
            <person name="Cotton M.D."/>
            <person name="Roberts K.M."/>
            <person name="Hurst M.A."/>
            <person name="Kaine B.P."/>
            <person name="Borodovsky M."/>
            <person name="Klenk H.-P."/>
            <person name="Fraser C.M."/>
            <person name="Smith H.O."/>
            <person name="Woese C.R."/>
            <person name="Venter J.C."/>
        </authorList>
    </citation>
    <scope>NUCLEOTIDE SEQUENCE [LARGE SCALE GENOMIC DNA]</scope>
    <source>
        <strain>ATCC 43067 / DSM 2661 / JAL-1 / JCM 10045 / NBRC 100440</strain>
    </source>
</reference>
<evidence type="ECO:0000250" key="1">
    <source>
        <dbReference type="UniProtKB" id="Q6LY39"/>
    </source>
</evidence>
<evidence type="ECO:0000255" key="2">
    <source>
        <dbReference type="PROSITE-ProRule" id="PRU00711"/>
    </source>
</evidence>
<evidence type="ECO:0000305" key="3"/>
<dbReference type="EC" id="1.8.98.-" evidence="3"/>
<dbReference type="EMBL" id="L77117">
    <property type="protein sequence ID" value="AAB98869.1"/>
    <property type="molecule type" value="Genomic_DNA"/>
</dbReference>
<dbReference type="PIR" id="H64407">
    <property type="entry name" value="H64407"/>
</dbReference>
<dbReference type="RefSeq" id="WP_010870379.1">
    <property type="nucleotide sequence ID" value="NC_000909.1"/>
</dbReference>
<dbReference type="SMR" id="Q58274"/>
<dbReference type="FunCoup" id="Q58274">
    <property type="interactions" value="92"/>
</dbReference>
<dbReference type="STRING" id="243232.MJ_0864"/>
<dbReference type="PaxDb" id="243232-MJ_0864"/>
<dbReference type="EnsemblBacteria" id="AAB98869">
    <property type="protein sequence ID" value="AAB98869"/>
    <property type="gene ID" value="MJ_0864"/>
</dbReference>
<dbReference type="GeneID" id="1451753"/>
<dbReference type="KEGG" id="mja:MJ_0864"/>
<dbReference type="eggNOG" id="arCOG00964">
    <property type="taxonomic scope" value="Archaea"/>
</dbReference>
<dbReference type="HOGENOM" id="CLU_121273_0_0_2"/>
<dbReference type="InParanoid" id="Q58274"/>
<dbReference type="OrthoDB" id="144910at2157"/>
<dbReference type="PhylomeDB" id="Q58274"/>
<dbReference type="UniPathway" id="UPA00647">
    <property type="reaction ID" value="UER00700"/>
</dbReference>
<dbReference type="Proteomes" id="UP000000805">
    <property type="component" value="Chromosome"/>
</dbReference>
<dbReference type="GO" id="GO:0005886">
    <property type="term" value="C:plasma membrane"/>
    <property type="evidence" value="ECO:0000318"/>
    <property type="project" value="GO_Central"/>
</dbReference>
<dbReference type="GO" id="GO:0051539">
    <property type="term" value="F:4 iron, 4 sulfur cluster binding"/>
    <property type="evidence" value="ECO:0007669"/>
    <property type="project" value="UniProtKB-KW"/>
</dbReference>
<dbReference type="GO" id="GO:0051912">
    <property type="term" value="F:CoB--CoM heterodisulfide reductase activity"/>
    <property type="evidence" value="ECO:0007669"/>
    <property type="project" value="InterPro"/>
</dbReference>
<dbReference type="GO" id="GO:0004368">
    <property type="term" value="F:glycerol-3-phosphate dehydrogenase (quinone) activity"/>
    <property type="evidence" value="ECO:0000318"/>
    <property type="project" value="GO_Central"/>
</dbReference>
<dbReference type="GO" id="GO:0046872">
    <property type="term" value="F:metal ion binding"/>
    <property type="evidence" value="ECO:0007669"/>
    <property type="project" value="UniProtKB-KW"/>
</dbReference>
<dbReference type="GO" id="GO:0009061">
    <property type="term" value="P:anaerobic respiration"/>
    <property type="evidence" value="ECO:0000318"/>
    <property type="project" value="GO_Central"/>
</dbReference>
<dbReference type="GO" id="GO:0022900">
    <property type="term" value="P:electron transport chain"/>
    <property type="evidence" value="ECO:0000318"/>
    <property type="project" value="GO_Central"/>
</dbReference>
<dbReference type="GO" id="GO:0015948">
    <property type="term" value="P:methanogenesis"/>
    <property type="evidence" value="ECO:0007669"/>
    <property type="project" value="UniProtKB-KW"/>
</dbReference>
<dbReference type="Gene3D" id="1.10.1060.10">
    <property type="entry name" value="Alpha-helical ferredoxin"/>
    <property type="match status" value="1"/>
</dbReference>
<dbReference type="InterPro" id="IPR017896">
    <property type="entry name" value="4Fe4S_Fe-S-bd"/>
</dbReference>
<dbReference type="InterPro" id="IPR017900">
    <property type="entry name" value="4Fe4S_Fe_S_CS"/>
</dbReference>
<dbReference type="InterPro" id="IPR017680">
    <property type="entry name" value="CoB/CoM_hetero-S_Rdtase_csu"/>
</dbReference>
<dbReference type="InterPro" id="IPR051460">
    <property type="entry name" value="HdrC_iron-sulfur_subunit"/>
</dbReference>
<dbReference type="InterPro" id="IPR009051">
    <property type="entry name" value="Helical_ferredxn"/>
</dbReference>
<dbReference type="NCBIfam" id="TIGR03290">
    <property type="entry name" value="CoB_CoM_SS_C"/>
    <property type="match status" value="1"/>
</dbReference>
<dbReference type="PANTHER" id="PTHR43255:SF1">
    <property type="entry name" value="IRON-SULFUR-BINDING OXIDOREDUCTASE FADF-RELATED"/>
    <property type="match status" value="1"/>
</dbReference>
<dbReference type="PANTHER" id="PTHR43255">
    <property type="entry name" value="IRON-SULFUR-BINDING OXIDOREDUCTASE FADF-RELATED-RELATED"/>
    <property type="match status" value="1"/>
</dbReference>
<dbReference type="Pfam" id="PF13183">
    <property type="entry name" value="Fer4_8"/>
    <property type="match status" value="1"/>
</dbReference>
<dbReference type="SUPFAM" id="SSF46548">
    <property type="entry name" value="alpha-helical ferredoxin"/>
    <property type="match status" value="1"/>
</dbReference>
<dbReference type="PROSITE" id="PS00198">
    <property type="entry name" value="4FE4S_FER_1"/>
    <property type="match status" value="2"/>
</dbReference>
<dbReference type="PROSITE" id="PS51379">
    <property type="entry name" value="4FE4S_FER_2"/>
    <property type="match status" value="2"/>
</dbReference>
<feature type="chain" id="PRO_0000150074" description="CoB--CoM heterodisulfide reductase iron-sulfur subunit C 2">
    <location>
        <begin position="1"/>
        <end position="186"/>
    </location>
</feature>
<feature type="domain" description="4Fe-4S ferredoxin-type 1" evidence="2">
    <location>
        <begin position="26"/>
        <end position="56"/>
    </location>
</feature>
<feature type="domain" description="4Fe-4S ferredoxin-type 2" evidence="2">
    <location>
        <begin position="67"/>
        <end position="99"/>
    </location>
</feature>
<feature type="binding site" evidence="2">
    <location>
        <position position="36"/>
    </location>
    <ligand>
        <name>[4Fe-4S] cluster</name>
        <dbReference type="ChEBI" id="CHEBI:49883"/>
        <label>1</label>
    </ligand>
</feature>
<feature type="binding site" evidence="2">
    <location>
        <position position="39"/>
    </location>
    <ligand>
        <name>[4Fe-4S] cluster</name>
        <dbReference type="ChEBI" id="CHEBI:49883"/>
        <label>1</label>
    </ligand>
</feature>
<feature type="binding site" evidence="2">
    <location>
        <position position="42"/>
    </location>
    <ligand>
        <name>[4Fe-4S] cluster</name>
        <dbReference type="ChEBI" id="CHEBI:49883"/>
        <label>1</label>
    </ligand>
</feature>
<feature type="binding site" evidence="2">
    <location>
        <position position="46"/>
    </location>
    <ligand>
        <name>[4Fe-4S] cluster</name>
        <dbReference type="ChEBI" id="CHEBI:49883"/>
        <label>2</label>
    </ligand>
</feature>
<feature type="binding site" evidence="2">
    <location>
        <position position="79"/>
    </location>
    <ligand>
        <name>[4Fe-4S] cluster</name>
        <dbReference type="ChEBI" id="CHEBI:49883"/>
        <label>2</label>
    </ligand>
</feature>
<feature type="binding site" evidence="2">
    <location>
        <position position="82"/>
    </location>
    <ligand>
        <name>[4Fe-4S] cluster</name>
        <dbReference type="ChEBI" id="CHEBI:49883"/>
        <label>2</label>
    </ligand>
</feature>
<feature type="binding site" evidence="2">
    <location>
        <position position="85"/>
    </location>
    <ligand>
        <name>[4Fe-4S] cluster</name>
        <dbReference type="ChEBI" id="CHEBI:49883"/>
        <label>2</label>
    </ligand>
</feature>
<feature type="binding site" evidence="2">
    <location>
        <position position="89"/>
    </location>
    <ligand>
        <name>[4Fe-4S] cluster</name>
        <dbReference type="ChEBI" id="CHEBI:49883"/>
        <label>1</label>
    </ligand>
</feature>
<proteinExistence type="inferred from homology"/>
<organism>
    <name type="scientific">Methanocaldococcus jannaschii (strain ATCC 43067 / DSM 2661 / JAL-1 / JCM 10045 / NBRC 100440)</name>
    <name type="common">Methanococcus jannaschii</name>
    <dbReference type="NCBI Taxonomy" id="243232"/>
    <lineage>
        <taxon>Archaea</taxon>
        <taxon>Methanobacteriati</taxon>
        <taxon>Methanobacteriota</taxon>
        <taxon>Methanomada group</taxon>
        <taxon>Methanococci</taxon>
        <taxon>Methanococcales</taxon>
        <taxon>Methanocaldococcaceae</taxon>
        <taxon>Methanocaldococcus</taxon>
    </lineage>
</organism>
<name>HDRC2_METJA</name>
<protein>
    <recommendedName>
        <fullName evidence="3">CoB--CoM heterodisulfide reductase iron-sulfur subunit C 2</fullName>
        <ecNumber evidence="3">1.8.98.-</ecNumber>
    </recommendedName>
</protein>
<sequence length="186" mass="21049">MAVIKLDEVNKNFVNEVIEAGKLVLGEDIVKSIKACYQCGTCTGSCPSGRRTAYRTRKVLRKVLLGLDDVLDSDDIWYCTTCYTCYERCPRDVKITEIIKTLRNIAAQKGNMALAHRKTASYVLRFGHAVPANNQIVELRGKLGLPAKSPTAQFSEKDLEEVRTLIKELKFDKLIAFDWEKMDLKE</sequence>
<gene>
    <name type="primary">hdrC2</name>
    <name type="ordered locus">MJ0864</name>
</gene>